<organism>
    <name type="scientific">Aspergillus fumigatus (strain ATCC MYA-4609 / CBS 101355 / FGSC A1100 / Af293)</name>
    <name type="common">Neosartorya fumigata</name>
    <dbReference type="NCBI Taxonomy" id="330879"/>
    <lineage>
        <taxon>Eukaryota</taxon>
        <taxon>Fungi</taxon>
        <taxon>Dikarya</taxon>
        <taxon>Ascomycota</taxon>
        <taxon>Pezizomycotina</taxon>
        <taxon>Eurotiomycetes</taxon>
        <taxon>Eurotiomycetidae</taxon>
        <taxon>Eurotiales</taxon>
        <taxon>Aspergillaceae</taxon>
        <taxon>Aspergillus</taxon>
        <taxon>Aspergillus subgen. Fumigati</taxon>
    </lineage>
</organism>
<gene>
    <name evidence="3" type="primary">erg27</name>
    <name type="ORF">AFUA_4G11500</name>
</gene>
<proteinExistence type="inferred from homology"/>
<name>ERG27_ASPFU</name>
<evidence type="ECO:0000250" key="1">
    <source>
        <dbReference type="UniProtKB" id="L0E2Z4"/>
    </source>
</evidence>
<evidence type="ECO:0000250" key="2">
    <source>
        <dbReference type="UniProtKB" id="O93868"/>
    </source>
</evidence>
<evidence type="ECO:0000250" key="3">
    <source>
        <dbReference type="UniProtKB" id="Q12452"/>
    </source>
</evidence>
<evidence type="ECO:0000305" key="4"/>
<evidence type="ECO:0000305" key="5">
    <source>
    </source>
</evidence>
<sequence length="450" mass="49563">MSDRDSQNDLGAKVFVLVTGANSGLGFSICCRLVDEFLKSHRHPRESLTVIFTTRSTRKGNDTLLRLQDHLRRASASASAPAAASARVTFVAENVDLSNLVSVRALSRRLNKTFPKLDAIVLNAGLGGWTGINWPKAIWGVMTDLVHEVSWPSFKIAPAGMVTDAQTALGDDKEPRLGAVFCANVFGHYMLAHNAMPLLRHSDMLHGPGRIIWVSSLEATVKHLDIDDIQGLRTLAPYESSKALTDILALTADLPSTAPWVKSFYSVDEQPEPRKETELEPPHPNMFLTHPGICGTGILPLSWPLFYSMLAAFWLARLLGSPWHTISTYAGACAPVWLALSAQAVLDDAEAPYRRNGGGRVKWGSSCNRLGQDQPVCTEVDGWGYGGVVGPAILEGDRRRRRKRGAVDLTAEEKLQYEDLGRKCWQRMEELRIQWDELLDEAEAQAKSEA</sequence>
<feature type="chain" id="PRO_0000454371" description="3-keto-steroid reductase erg27">
    <location>
        <begin position="1"/>
        <end position="450"/>
    </location>
</feature>
<feature type="active site" description="Proton donor" evidence="2">
    <location>
        <position position="215"/>
    </location>
</feature>
<feature type="active site" description="Proton donor" evidence="2">
    <location>
        <position position="238"/>
    </location>
</feature>
<feature type="active site" description="Lowers pKa of active site Tyr" evidence="2">
    <location>
        <position position="242"/>
    </location>
</feature>
<feature type="binding site" evidence="1">
    <location>
        <position position="25"/>
    </location>
    <ligand>
        <name>NADP(+)</name>
        <dbReference type="ChEBI" id="CHEBI:58349"/>
    </ligand>
</feature>
<feature type="binding site" evidence="1">
    <location>
        <position position="53"/>
    </location>
    <ligand>
        <name>NADP(+)</name>
        <dbReference type="ChEBI" id="CHEBI:58349"/>
    </ligand>
</feature>
<feature type="binding site" evidence="1">
    <location>
        <position position="59"/>
    </location>
    <ligand>
        <name>NADP(+)</name>
        <dbReference type="ChEBI" id="CHEBI:58349"/>
    </ligand>
</feature>
<feature type="binding site" evidence="2">
    <location>
        <position position="238"/>
    </location>
    <ligand>
        <name>NADP(+)</name>
        <dbReference type="ChEBI" id="CHEBI:58349"/>
    </ligand>
</feature>
<feature type="binding site" evidence="2">
    <location>
        <position position="242"/>
    </location>
    <ligand>
        <name>NADP(+)</name>
        <dbReference type="ChEBI" id="CHEBI:58349"/>
    </ligand>
</feature>
<feature type="binding site" evidence="1">
    <location>
        <position position="296"/>
    </location>
    <ligand>
        <name>NADP(+)</name>
        <dbReference type="ChEBI" id="CHEBI:58349"/>
    </ligand>
</feature>
<dbReference type="EC" id="1.1.1.-" evidence="3"/>
<dbReference type="EMBL" id="AAHF01000005">
    <property type="protein sequence ID" value="EAL89642.1"/>
    <property type="molecule type" value="Genomic_DNA"/>
</dbReference>
<dbReference type="RefSeq" id="XP_751680.1">
    <property type="nucleotide sequence ID" value="XM_746587.1"/>
</dbReference>
<dbReference type="FunCoup" id="Q4WQ42">
    <property type="interactions" value="143"/>
</dbReference>
<dbReference type="STRING" id="330879.Q4WQ42"/>
<dbReference type="EnsemblFungi" id="EAL89642">
    <property type="protein sequence ID" value="EAL89642"/>
    <property type="gene ID" value="AFUA_4G11500"/>
</dbReference>
<dbReference type="GeneID" id="3509468"/>
<dbReference type="KEGG" id="afm:AFUA_4G11500"/>
<dbReference type="VEuPathDB" id="FungiDB:Afu4g11500"/>
<dbReference type="eggNOG" id="KOG1478">
    <property type="taxonomic scope" value="Eukaryota"/>
</dbReference>
<dbReference type="HOGENOM" id="CLU_029944_0_0_1"/>
<dbReference type="InParanoid" id="Q4WQ42"/>
<dbReference type="OMA" id="WTGINWP"/>
<dbReference type="OrthoDB" id="9989144at2759"/>
<dbReference type="UniPathway" id="UPA00768"/>
<dbReference type="Proteomes" id="UP000002530">
    <property type="component" value="Chromosome 4"/>
</dbReference>
<dbReference type="GO" id="GO:0005789">
    <property type="term" value="C:endoplasmic reticulum membrane"/>
    <property type="evidence" value="ECO:0000318"/>
    <property type="project" value="GO_Central"/>
</dbReference>
<dbReference type="GO" id="GO:0005811">
    <property type="term" value="C:lipid droplet"/>
    <property type="evidence" value="ECO:0000318"/>
    <property type="project" value="GO_Central"/>
</dbReference>
<dbReference type="GO" id="GO:0000253">
    <property type="term" value="F:3-beta-hydroxysteroid 3-dehydrogenase (NADP+) activity"/>
    <property type="evidence" value="ECO:0000318"/>
    <property type="project" value="GO_Central"/>
</dbReference>
<dbReference type="GO" id="GO:0006696">
    <property type="term" value="P:ergosterol biosynthetic process"/>
    <property type="evidence" value="ECO:0000318"/>
    <property type="project" value="GO_Central"/>
</dbReference>
<dbReference type="FunFam" id="3.40.50.720:FF:000524">
    <property type="entry name" value="3-ketosteroid reductase"/>
    <property type="match status" value="1"/>
</dbReference>
<dbReference type="Gene3D" id="3.40.50.720">
    <property type="entry name" value="NAD(P)-binding Rossmann-like Domain"/>
    <property type="match status" value="1"/>
</dbReference>
<dbReference type="InterPro" id="IPR051593">
    <property type="entry name" value="Ergosterol_Biosynth_ERG27"/>
</dbReference>
<dbReference type="InterPro" id="IPR036291">
    <property type="entry name" value="NAD(P)-bd_dom_sf"/>
</dbReference>
<dbReference type="PANTHER" id="PTHR43647:SF1">
    <property type="entry name" value="3-KETO-STEROID REDUCTASE ERG27"/>
    <property type="match status" value="1"/>
</dbReference>
<dbReference type="PANTHER" id="PTHR43647">
    <property type="entry name" value="DEHYDROGENASE"/>
    <property type="match status" value="1"/>
</dbReference>
<dbReference type="SUPFAM" id="SSF51735">
    <property type="entry name" value="NAD(P)-binding Rossmann-fold domains"/>
    <property type="match status" value="1"/>
</dbReference>
<reference key="1">
    <citation type="journal article" date="2005" name="Nature">
        <title>Genomic sequence of the pathogenic and allergenic filamentous fungus Aspergillus fumigatus.</title>
        <authorList>
            <person name="Nierman W.C."/>
            <person name="Pain A."/>
            <person name="Anderson M.J."/>
            <person name="Wortman J.R."/>
            <person name="Kim H.S."/>
            <person name="Arroyo J."/>
            <person name="Berriman M."/>
            <person name="Abe K."/>
            <person name="Archer D.B."/>
            <person name="Bermejo C."/>
            <person name="Bennett J.W."/>
            <person name="Bowyer P."/>
            <person name="Chen D."/>
            <person name="Collins M."/>
            <person name="Coulsen R."/>
            <person name="Davies R."/>
            <person name="Dyer P.S."/>
            <person name="Farman M.L."/>
            <person name="Fedorova N."/>
            <person name="Fedorova N.D."/>
            <person name="Feldblyum T.V."/>
            <person name="Fischer R."/>
            <person name="Fosker N."/>
            <person name="Fraser A."/>
            <person name="Garcia J.L."/>
            <person name="Garcia M.J."/>
            <person name="Goble A."/>
            <person name="Goldman G.H."/>
            <person name="Gomi K."/>
            <person name="Griffith-Jones S."/>
            <person name="Gwilliam R."/>
            <person name="Haas B.J."/>
            <person name="Haas H."/>
            <person name="Harris D.E."/>
            <person name="Horiuchi H."/>
            <person name="Huang J."/>
            <person name="Humphray S."/>
            <person name="Jimenez J."/>
            <person name="Keller N."/>
            <person name="Khouri H."/>
            <person name="Kitamoto K."/>
            <person name="Kobayashi T."/>
            <person name="Konzack S."/>
            <person name="Kulkarni R."/>
            <person name="Kumagai T."/>
            <person name="Lafton A."/>
            <person name="Latge J.-P."/>
            <person name="Li W."/>
            <person name="Lord A."/>
            <person name="Lu C."/>
            <person name="Majoros W.H."/>
            <person name="May G.S."/>
            <person name="Miller B.L."/>
            <person name="Mohamoud Y."/>
            <person name="Molina M."/>
            <person name="Monod M."/>
            <person name="Mouyna I."/>
            <person name="Mulligan S."/>
            <person name="Murphy L.D."/>
            <person name="O'Neil S."/>
            <person name="Paulsen I."/>
            <person name="Penalva M.A."/>
            <person name="Pertea M."/>
            <person name="Price C."/>
            <person name="Pritchard B.L."/>
            <person name="Quail M.A."/>
            <person name="Rabbinowitsch E."/>
            <person name="Rawlins N."/>
            <person name="Rajandream M.A."/>
            <person name="Reichard U."/>
            <person name="Renauld H."/>
            <person name="Robson G.D."/>
            <person name="Rodriguez de Cordoba S."/>
            <person name="Rodriguez-Pena J.M."/>
            <person name="Ronning C.M."/>
            <person name="Rutter S."/>
            <person name="Salzberg S.L."/>
            <person name="Sanchez M."/>
            <person name="Sanchez-Ferrero J.C."/>
            <person name="Saunders D."/>
            <person name="Seeger K."/>
            <person name="Squares R."/>
            <person name="Squares S."/>
            <person name="Takeuchi M."/>
            <person name="Tekaia F."/>
            <person name="Turner G."/>
            <person name="Vazquez de Aldana C.R."/>
            <person name="Weidman J."/>
            <person name="White O."/>
            <person name="Woodward J.R."/>
            <person name="Yu J.-H."/>
            <person name="Fraser C.M."/>
            <person name="Galagan J.E."/>
            <person name="Asai K."/>
            <person name="Machida M."/>
            <person name="Hall N."/>
            <person name="Barrell B.G."/>
            <person name="Denning D.W."/>
        </authorList>
    </citation>
    <scope>NUCLEOTIDE SEQUENCE [LARGE SCALE GENOMIC DNA]</scope>
    <source>
        <strain>ATCC MYA-4609 / CBS 101355 / FGSC A1100 / Af293</strain>
    </source>
</reference>
<reference key="2">
    <citation type="journal article" date="2008" name="Steroids">
        <title>Ergosterol biosynthesis pathway in Aspergillus fumigatus.</title>
        <authorList>
            <person name="Alcazar-Fuoli L."/>
            <person name="Mellado E."/>
            <person name="Garcia-Effron G."/>
            <person name="Lopez J.F."/>
            <person name="Grimalt J.O."/>
            <person name="Cuenca-Estrella J.M."/>
            <person name="Rodriguez-Tudela J.L."/>
        </authorList>
    </citation>
    <scope>FUNCTION</scope>
</reference>
<protein>
    <recommendedName>
        <fullName evidence="3">3-keto-steroid reductase erg27</fullName>
        <ecNumber evidence="3">1.1.1.-</ecNumber>
    </recommendedName>
    <alternativeName>
        <fullName evidence="3">Ergosterol biosynthetic protein 27</fullName>
    </alternativeName>
</protein>
<keyword id="KW-0256">Endoplasmic reticulum</keyword>
<keyword id="KW-0444">Lipid biosynthesis</keyword>
<keyword id="KW-0551">Lipid droplet</keyword>
<keyword id="KW-0443">Lipid metabolism</keyword>
<keyword id="KW-0472">Membrane</keyword>
<keyword id="KW-0521">NADP</keyword>
<keyword id="KW-0560">Oxidoreductase</keyword>
<keyword id="KW-1185">Reference proteome</keyword>
<keyword id="KW-0752">Steroid biosynthesis</keyword>
<accession>Q4WQ42</accession>
<comment type="function">
    <text evidence="3 5">Sterol-C4-methyl oxidase; part of the third module of ergosterol biosynthesis pathway that includes the late steps of the pathway (By similarity). Erg27 is a catalytic component of the C-4 demethylation complex that catalyzes the conversion of 4,4-dimethylfecosterol into fecosterol via 4-methylfecosterol (By similarity). The third module or late pathway involves the ergosterol synthesis itself through consecutive reactions that mainly occur in the endoplasmic reticulum (ER) membrane. Firstly, the squalene synthase erg9 catalyzes the condensation of 2 farnesyl pyrophosphate moieties to form squalene, which is the precursor of all steroids. Squalene synthase is crucial for balancing the incorporation of farnesyl diphosphate (FPP) into sterol and nonsterol isoprene synthesis. Secondly, squalene is converted into lanosterol by the consecutive action of the squalene epoxidase erg1 and the lanosterol synthase erg7. Then, the delta(24)-sterol C-methyltransferase erg6 methylates lanosterol at C-24 to produce eburicol. Eburicol is the substrate of the sterol 14-alpha demethylase encoded by cyp51A and cyp51B, to yield 4,4,24-trimethyl ergosta-8,14,24(28)-trienol. The C-14 reductase erg24 then reduces the C14=C15 double bond which leads to 4,4-dimethylfecosterol. A sequence of further demethylations at C-4, involving the C-4 demethylation complex containing the C-4 methylsterol oxidases erg25A or erg25B, the sterol-4-alpha-carboxylate 3-dehydrogenase erg26 and the 3-keto-steroid reductase erg27, leads to the production of fecosterol via 4-methylfecosterol. The C-8 sterol isomerase erg2 then catalyzes the reaction which results in unsaturation at C-7 in the B ring of sterols and thus converts fecosterol to episterol. The sterol-C5-desaturase erg3B then catalyzes the introduction of a C-5 double bond in the B ring to produce 5-dehydroepisterol. The 2 other sterol-C5-desaturases, erg3A and erg3C, seem to be less important in ergosterol biosynthesis. The C-22 sterol desaturase erg5 further converts 5-dehydroepisterol into ergosta-5,7,22,24(28)-tetraen-3beta-ol by forming the C-22(23) double bond in the sterol side chain. Finally, ergosta-5,7,22,24(28)-tetraen-3beta-ol is substrate of the C-24(28) sterol reductases erg4A and erg4B to produce ergosterol. Possible alternative sterol biosynthetic pathways might exist from fecosterol to ergosterol, depending on the activities of the erg3 isoforms (Probable) (PubMed:18191972).</text>
</comment>
<comment type="pathway">
    <text evidence="3">Steroid metabolism; ergosterol biosynthesis.</text>
</comment>
<comment type="subunit">
    <text evidence="3">Heterotetramer of erg25, erg26, erg27 and erg28 (By similarity). Erg28 acts as a scaffold to tether erg27 and other 4,4-demethylation-related enzymes, forming a demethylation enzyme complex, in the endoplasmic reticulum (By similarity).</text>
</comment>
<comment type="subcellular location">
    <subcellularLocation>
        <location evidence="3">Endoplasmic reticulum membrane</location>
        <topology evidence="3">Peripheral membrane protein</topology>
    </subcellularLocation>
    <subcellularLocation>
        <location evidence="3">Lipid droplet</location>
    </subcellularLocation>
</comment>
<comment type="miscellaneous">
    <text evidence="5">In Aspergillus, the biosynthesis pathway of the sterol precursors leading to the prevalent sterol ergosterol differs from yeast. The ring system of lanosterol in S.cerevisiae is firstly demethylised in three enzymatic steps leading to the intermediate zymosterol and secondly a methyl group is added to zymosterol by the sterol 24-C-methyltransferase to form fecosterol. In Aspergillus, lanosterol is firstly transmethylated by the sterol 24-C-methyltransferase leading to the intermediate eburicol and secondly demethylated in three steps to form fecosterol.</text>
</comment>
<comment type="similarity">
    <text evidence="4">Belongs to the short-chain dehydrogenases/reductases (SDR) family. ERG27 subfamily.</text>
</comment>